<gene>
    <name type="primary">Hdgfl2</name>
    <name type="synonym">Hdgfrp2</name>
</gene>
<dbReference type="EMBL" id="D63850">
    <property type="protein sequence ID" value="BAA22896.1"/>
    <property type="molecule type" value="mRNA"/>
</dbReference>
<dbReference type="EMBL" id="FN687734">
    <property type="protein sequence ID" value="CBK52221.2"/>
    <property type="molecule type" value="mRNA"/>
</dbReference>
<dbReference type="EMBL" id="AK143616">
    <property type="protein sequence ID" value="BAE25467.1"/>
    <property type="molecule type" value="mRNA"/>
</dbReference>
<dbReference type="EMBL" id="AK144669">
    <property type="protein sequence ID" value="BAE25999.1"/>
    <property type="molecule type" value="mRNA"/>
</dbReference>
<dbReference type="EMBL" id="AK146813">
    <property type="protein sequence ID" value="BAE27453.1"/>
    <property type="molecule type" value="mRNA"/>
</dbReference>
<dbReference type="EMBL" id="AK146918">
    <property type="protein sequence ID" value="BAE27530.1"/>
    <property type="molecule type" value="mRNA"/>
</dbReference>
<dbReference type="EMBL" id="BC003741">
    <property type="protein sequence ID" value="AAH03741.1"/>
    <property type="molecule type" value="mRNA"/>
</dbReference>
<dbReference type="CCDS" id="CCDS28894.1">
    <molecule id="Q3UMU9-1"/>
</dbReference>
<dbReference type="CCDS" id="CCDS89122.1">
    <molecule id="Q3UMU9-3"/>
</dbReference>
<dbReference type="CCDS" id="CCDS89123.1">
    <molecule id="Q3UMU9-2"/>
</dbReference>
<dbReference type="PIR" id="JC5662">
    <property type="entry name" value="JC5662"/>
</dbReference>
<dbReference type="RefSeq" id="NP_001291713.1">
    <molecule id="Q3UMU9-3"/>
    <property type="nucleotide sequence ID" value="NM_001304784.3"/>
</dbReference>
<dbReference type="RefSeq" id="NP_001291714.1">
    <molecule id="Q3UMU9-2"/>
    <property type="nucleotide sequence ID" value="NM_001304785.3"/>
</dbReference>
<dbReference type="RefSeq" id="NP_001317982.1">
    <property type="nucleotide sequence ID" value="NM_001331053.1"/>
</dbReference>
<dbReference type="RefSeq" id="NP_032259.1">
    <molecule id="Q3UMU9-1"/>
    <property type="nucleotide sequence ID" value="NM_008233.5"/>
</dbReference>
<dbReference type="SMR" id="Q3UMU9"/>
<dbReference type="BioGRID" id="200267">
    <property type="interactions" value="9"/>
</dbReference>
<dbReference type="FunCoup" id="Q3UMU9">
    <property type="interactions" value="2259"/>
</dbReference>
<dbReference type="IntAct" id="Q3UMU9">
    <property type="interactions" value="4"/>
</dbReference>
<dbReference type="MINT" id="Q3UMU9"/>
<dbReference type="STRING" id="10090.ENSMUSP00000152948"/>
<dbReference type="GlyGen" id="Q3UMU9">
    <property type="glycosylation" value="1 site, 1 O-linked glycan (1 site)"/>
</dbReference>
<dbReference type="iPTMnet" id="Q3UMU9"/>
<dbReference type="PhosphoSitePlus" id="Q3UMU9"/>
<dbReference type="SwissPalm" id="Q3UMU9"/>
<dbReference type="jPOST" id="Q3UMU9"/>
<dbReference type="PaxDb" id="10090-ENSMUSP00000002911"/>
<dbReference type="PeptideAtlas" id="Q3UMU9"/>
<dbReference type="ProteomicsDB" id="269646">
    <molecule id="Q3UMU9-1"/>
</dbReference>
<dbReference type="ProteomicsDB" id="269647">
    <molecule id="Q3UMU9-2"/>
</dbReference>
<dbReference type="ProteomicsDB" id="269648">
    <molecule id="Q3UMU9-3"/>
</dbReference>
<dbReference type="ProteomicsDB" id="269649">
    <molecule id="Q3UMU9-4"/>
</dbReference>
<dbReference type="Pumba" id="Q3UMU9"/>
<dbReference type="Antibodypedia" id="42428">
    <property type="antibodies" value="148 antibodies from 29 providers"/>
</dbReference>
<dbReference type="DNASU" id="15193"/>
<dbReference type="Ensembl" id="ENSMUST00000002911.10">
    <molecule id="Q3UMU9-2"/>
    <property type="protein sequence ID" value="ENSMUSP00000002911.10"/>
    <property type="gene ID" value="ENSMUSG00000002833.12"/>
</dbReference>
<dbReference type="Ensembl" id="ENSMUST00000225843.2">
    <molecule id="Q3UMU9-3"/>
    <property type="protein sequence ID" value="ENSMUSP00000153249.2"/>
    <property type="gene ID" value="ENSMUSG00000002833.12"/>
</dbReference>
<dbReference type="Ensembl" id="ENSMUST00000226053.2">
    <molecule id="Q3UMU9-1"/>
    <property type="protein sequence ID" value="ENSMUSP00000152948.2"/>
    <property type="gene ID" value="ENSMUSG00000002833.12"/>
</dbReference>
<dbReference type="GeneID" id="15193"/>
<dbReference type="KEGG" id="mmu:15193"/>
<dbReference type="UCSC" id="uc008dau.2">
    <molecule id="Q3UMU9-1"/>
    <property type="organism name" value="mouse"/>
</dbReference>
<dbReference type="UCSC" id="uc008dav.3">
    <molecule id="Q3UMU9-2"/>
    <property type="organism name" value="mouse"/>
</dbReference>
<dbReference type="UCSC" id="uc008daw.2">
    <molecule id="Q3UMU9-3"/>
    <property type="organism name" value="mouse"/>
</dbReference>
<dbReference type="UCSC" id="uc012avq.2">
    <molecule id="Q3UMU9-4"/>
    <property type="organism name" value="mouse"/>
</dbReference>
<dbReference type="AGR" id="MGI:1194492"/>
<dbReference type="CTD" id="84717"/>
<dbReference type="MGI" id="MGI:1194492">
    <property type="gene designation" value="Hdgfl2"/>
</dbReference>
<dbReference type="VEuPathDB" id="HostDB:ENSMUSG00000002833"/>
<dbReference type="eggNOG" id="KOG1904">
    <property type="taxonomic scope" value="Eukaryota"/>
</dbReference>
<dbReference type="GeneTree" id="ENSGT00940000153942"/>
<dbReference type="HOGENOM" id="CLU_034054_0_0_1"/>
<dbReference type="InParanoid" id="Q3UMU9"/>
<dbReference type="OMA" id="HINATQD"/>
<dbReference type="OrthoDB" id="90127at9989"/>
<dbReference type="PhylomeDB" id="Q3UMU9"/>
<dbReference type="TreeFam" id="TF105385"/>
<dbReference type="BioGRID-ORCS" id="15193">
    <property type="hits" value="5 hits in 63 CRISPR screens"/>
</dbReference>
<dbReference type="ChiTaRS" id="Hdgfl2">
    <property type="organism name" value="mouse"/>
</dbReference>
<dbReference type="PRO" id="PR:Q3UMU9"/>
<dbReference type="Proteomes" id="UP000000589">
    <property type="component" value="Chromosome 17"/>
</dbReference>
<dbReference type="RNAct" id="Q3UMU9">
    <property type="molecule type" value="protein"/>
</dbReference>
<dbReference type="Bgee" id="ENSMUSG00000002833">
    <property type="expression patterns" value="Expressed in retinal neural layer and 257 other cell types or tissues"/>
</dbReference>
<dbReference type="GO" id="GO:0005737">
    <property type="term" value="C:cytoplasm"/>
    <property type="evidence" value="ECO:0000250"/>
    <property type="project" value="UniProtKB"/>
</dbReference>
<dbReference type="GO" id="GO:0005634">
    <property type="term" value="C:nucleus"/>
    <property type="evidence" value="ECO:0000314"/>
    <property type="project" value="MGI"/>
</dbReference>
<dbReference type="GO" id="GO:0003682">
    <property type="term" value="F:chromatin binding"/>
    <property type="evidence" value="ECO:0000314"/>
    <property type="project" value="MGI"/>
</dbReference>
<dbReference type="GO" id="GO:0061628">
    <property type="term" value="F:histone H3K27me3 reader activity"/>
    <property type="evidence" value="ECO:0000250"/>
    <property type="project" value="UniProtKB"/>
</dbReference>
<dbReference type="GO" id="GO:0062072">
    <property type="term" value="F:histone H3K9me2/3 reader activity"/>
    <property type="evidence" value="ECO:0000250"/>
    <property type="project" value="UniProtKB"/>
</dbReference>
<dbReference type="GO" id="GO:0006310">
    <property type="term" value="P:DNA recombination"/>
    <property type="evidence" value="ECO:0007669"/>
    <property type="project" value="UniProtKB-KW"/>
</dbReference>
<dbReference type="GO" id="GO:0006281">
    <property type="term" value="P:DNA repair"/>
    <property type="evidence" value="ECO:0007669"/>
    <property type="project" value="UniProtKB-KW"/>
</dbReference>
<dbReference type="GO" id="GO:0140861">
    <property type="term" value="P:DNA repair-dependent chromatin remodeling"/>
    <property type="evidence" value="ECO:0007669"/>
    <property type="project" value="Ensembl"/>
</dbReference>
<dbReference type="GO" id="GO:0042692">
    <property type="term" value="P:muscle cell differentiation"/>
    <property type="evidence" value="ECO:0000315"/>
    <property type="project" value="UniProtKB"/>
</dbReference>
<dbReference type="GO" id="GO:0007517">
    <property type="term" value="P:muscle organ development"/>
    <property type="evidence" value="ECO:0007669"/>
    <property type="project" value="UniProtKB-KW"/>
</dbReference>
<dbReference type="GO" id="GO:0030307">
    <property type="term" value="P:positive regulation of cell growth"/>
    <property type="evidence" value="ECO:0000250"/>
    <property type="project" value="UniProtKB"/>
</dbReference>
<dbReference type="GO" id="GO:1905168">
    <property type="term" value="P:positive regulation of double-strand break repair via homologous recombination"/>
    <property type="evidence" value="ECO:0000250"/>
    <property type="project" value="UniProtKB"/>
</dbReference>
<dbReference type="GO" id="GO:0043403">
    <property type="term" value="P:skeletal muscle tissue regeneration"/>
    <property type="evidence" value="ECO:0000315"/>
    <property type="project" value="UniProtKB"/>
</dbReference>
<dbReference type="CDD" id="cd20149">
    <property type="entry name" value="PWWP_HDGFL2"/>
    <property type="match status" value="1"/>
</dbReference>
<dbReference type="FunFam" id="2.30.30.140:FF:000017">
    <property type="entry name" value="hepatoma-derived growth factor isoform X1"/>
    <property type="match status" value="1"/>
</dbReference>
<dbReference type="FunFam" id="1.20.930.10:FF:000009">
    <property type="entry name" value="Hepatoma-derived growth factor-related protein 2"/>
    <property type="match status" value="1"/>
</dbReference>
<dbReference type="Gene3D" id="2.30.30.140">
    <property type="match status" value="1"/>
</dbReference>
<dbReference type="Gene3D" id="1.20.930.10">
    <property type="entry name" value="Conserved domain common to transcription factors TFIIS, elongin A, CRSP70"/>
    <property type="match status" value="1"/>
</dbReference>
<dbReference type="InterPro" id="IPR036218">
    <property type="entry name" value="HIVI-bd_sf"/>
</dbReference>
<dbReference type="InterPro" id="IPR021567">
    <property type="entry name" value="LEDGF_IBD"/>
</dbReference>
<dbReference type="InterPro" id="IPR000313">
    <property type="entry name" value="PWWP_dom"/>
</dbReference>
<dbReference type="InterPro" id="IPR035441">
    <property type="entry name" value="TFIIS/LEDGF_dom_sf"/>
</dbReference>
<dbReference type="PANTHER" id="PTHR12550">
    <property type="entry name" value="HEPATOMA-DERIVED GROWTH FACTOR-RELATED"/>
    <property type="match status" value="1"/>
</dbReference>
<dbReference type="PANTHER" id="PTHR12550:SF18">
    <property type="entry name" value="HEPATOMA-DERIVED GROWTH FACTOR-RELATED PROTEIN 2"/>
    <property type="match status" value="1"/>
</dbReference>
<dbReference type="Pfam" id="PF11467">
    <property type="entry name" value="LEDGF"/>
    <property type="match status" value="1"/>
</dbReference>
<dbReference type="Pfam" id="PF00855">
    <property type="entry name" value="PWWP"/>
    <property type="match status" value="1"/>
</dbReference>
<dbReference type="SMART" id="SM00293">
    <property type="entry name" value="PWWP"/>
    <property type="match status" value="1"/>
</dbReference>
<dbReference type="SUPFAM" id="SSF140576">
    <property type="entry name" value="HIV integrase-binding domain"/>
    <property type="match status" value="1"/>
</dbReference>
<dbReference type="SUPFAM" id="SSF63748">
    <property type="entry name" value="Tudor/PWWP/MBT"/>
    <property type="match status" value="1"/>
</dbReference>
<dbReference type="PROSITE" id="PS50812">
    <property type="entry name" value="PWWP"/>
    <property type="match status" value="1"/>
</dbReference>
<name>HDGR2_MOUSE</name>
<feature type="chain" id="PRO_0000317644" description="Hepatoma-derived growth factor-related protein 2">
    <location>
        <begin position="1"/>
        <end position="669"/>
    </location>
</feature>
<feature type="domain" description="PWWP" evidence="4">
    <location>
        <begin position="7"/>
        <end position="64"/>
    </location>
</feature>
<feature type="region of interest" description="Disordered" evidence="5">
    <location>
        <begin position="87"/>
        <end position="469"/>
    </location>
</feature>
<feature type="region of interest" description="Interaction with DPF3/BAF45C isoform 2" evidence="1">
    <location>
        <begin position="466"/>
        <end position="548"/>
    </location>
</feature>
<feature type="region of interest" description="Disordered" evidence="5">
    <location>
        <begin position="558"/>
        <end position="669"/>
    </location>
</feature>
<feature type="coiled-coil region" evidence="3">
    <location>
        <begin position="550"/>
        <end position="575"/>
    </location>
</feature>
<feature type="compositionally biased region" description="Basic and acidic residues" evidence="5">
    <location>
        <begin position="115"/>
        <end position="124"/>
    </location>
</feature>
<feature type="compositionally biased region" description="Low complexity" evidence="5">
    <location>
        <begin position="127"/>
        <end position="137"/>
    </location>
</feature>
<feature type="compositionally biased region" description="Basic and acidic residues" evidence="5">
    <location>
        <begin position="138"/>
        <end position="154"/>
    </location>
</feature>
<feature type="compositionally biased region" description="Basic residues" evidence="5">
    <location>
        <begin position="155"/>
        <end position="172"/>
    </location>
</feature>
<feature type="compositionally biased region" description="Basic and acidic residues" evidence="5">
    <location>
        <begin position="194"/>
        <end position="209"/>
    </location>
</feature>
<feature type="compositionally biased region" description="Basic and acidic residues" evidence="5">
    <location>
        <begin position="233"/>
        <end position="246"/>
    </location>
</feature>
<feature type="compositionally biased region" description="Low complexity" evidence="5">
    <location>
        <begin position="252"/>
        <end position="269"/>
    </location>
</feature>
<feature type="compositionally biased region" description="Basic and acidic residues" evidence="5">
    <location>
        <begin position="313"/>
        <end position="363"/>
    </location>
</feature>
<feature type="compositionally biased region" description="Basic and acidic residues" evidence="5">
    <location>
        <begin position="419"/>
        <end position="469"/>
    </location>
</feature>
<feature type="compositionally biased region" description="Basic and acidic residues" evidence="5">
    <location>
        <begin position="561"/>
        <end position="584"/>
    </location>
</feature>
<feature type="compositionally biased region" description="Basic and acidic residues" evidence="5">
    <location>
        <begin position="622"/>
        <end position="657"/>
    </location>
</feature>
<feature type="modified residue" description="Phosphoserine" evidence="1">
    <location>
        <position position="114"/>
    </location>
</feature>
<feature type="modified residue" description="Phosphoserine" evidence="1">
    <location>
        <position position="137"/>
    </location>
</feature>
<feature type="modified residue" description="Phosphoserine" evidence="1">
    <location>
        <position position="165"/>
    </location>
</feature>
<feature type="modified residue" description="Phosphoserine" evidence="1">
    <location>
        <position position="229"/>
    </location>
</feature>
<feature type="modified residue" description="Phosphoserine" evidence="1">
    <location>
        <position position="231"/>
    </location>
</feature>
<feature type="modified residue" description="Phosphoserine" evidence="1">
    <location>
        <position position="233"/>
    </location>
</feature>
<feature type="modified residue" description="Phosphoserine" evidence="1">
    <location>
        <position position="239"/>
    </location>
</feature>
<feature type="modified residue" description="Phosphoserine" evidence="1">
    <location>
        <position position="268"/>
    </location>
</feature>
<feature type="modified residue" description="Phosphoserine" evidence="1">
    <location>
        <position position="307"/>
    </location>
</feature>
<feature type="modified residue" description="Phosphoserine" evidence="12 13 14 15 16 17">
    <location>
        <position position="366"/>
    </location>
</feature>
<feature type="modified residue" description="Phosphoserine" evidence="12 14 15 16">
    <location>
        <position position="367"/>
    </location>
</feature>
<feature type="modified residue" description="Phosphoserine" evidence="1">
    <location>
        <position position="391"/>
    </location>
</feature>
<feature type="modified residue" description="Phosphoserine" evidence="1">
    <location>
        <position position="392"/>
    </location>
</feature>
<feature type="modified residue" description="Phosphoserine" evidence="1">
    <location>
        <position position="393"/>
    </location>
</feature>
<feature type="modified residue" description="Phosphoserine" evidence="1">
    <location>
        <position position="395"/>
    </location>
</feature>
<feature type="modified residue" description="Phosphoserine" evidence="13 17">
    <location>
        <position position="450"/>
    </location>
</feature>
<feature type="modified residue" description="Phosphoserine" evidence="2">
    <location>
        <position position="454"/>
    </location>
</feature>
<feature type="modified residue" description="Phosphoserine" evidence="17">
    <location>
        <position position="620"/>
    </location>
</feature>
<feature type="modified residue" description="Phosphoserine" evidence="17">
    <location>
        <position position="628"/>
    </location>
</feature>
<feature type="modified residue" description="Phosphoserine" evidence="17">
    <location>
        <position position="629"/>
    </location>
</feature>
<feature type="modified residue" description="Phosphoserine" evidence="13 17">
    <location>
        <position position="635"/>
    </location>
</feature>
<feature type="modified residue" description="Phosphoserine" evidence="17">
    <location>
        <position position="640"/>
    </location>
</feature>
<feature type="modified residue" description="Phosphoserine" evidence="17">
    <location>
        <position position="659"/>
    </location>
</feature>
<feature type="modified residue" description="Phosphoserine" evidence="17">
    <location>
        <position position="661"/>
    </location>
</feature>
<feature type="modified residue" description="Phosphoserine" evidence="17">
    <location>
        <position position="669"/>
    </location>
</feature>
<feature type="cross-link" description="Glycyl lysine isopeptide (Lys-Gly) (interchain with G-Cter in SUMO2)" evidence="1">
    <location>
        <position position="550"/>
    </location>
</feature>
<feature type="splice variant" id="VSP_047648" description="In isoform 4." evidence="10">
    <location>
        <begin position="66"/>
        <end position="118"/>
    </location>
</feature>
<feature type="splice variant" id="VSP_031117" description="In isoform 3." evidence="8 9">
    <original>KK</original>
    <variation>KKHPTGYACPQ</variation>
    <location>
        <begin position="224"/>
        <end position="225"/>
    </location>
</feature>
<feature type="splice variant" id="VSP_031118" description="In isoform 2." evidence="9">
    <location>
        <position position="226"/>
    </location>
</feature>
<feature type="splice variant" id="VSP_031119" description="In isoform 2 and isoform 4." evidence="9 10">
    <location>
        <position position="635"/>
    </location>
</feature>
<feature type="mutagenesis site" description="Loss of interaction with SMARCA4." evidence="7">
    <original>RR</original>
    <variation>AA</variation>
    <location>
        <begin position="523"/>
        <end position="524"/>
    </location>
</feature>
<feature type="modified residue" description="Phosphoserine" evidence="17">
    <location sequence="Q3UMU9-2">
        <position position="619"/>
    </location>
</feature>
<feature type="modified residue" description="Phosphoserine" evidence="17">
    <location sequence="Q3UMU9-4">
        <position position="567"/>
    </location>
</feature>
<organism>
    <name type="scientific">Mus musculus</name>
    <name type="common">Mouse</name>
    <dbReference type="NCBI Taxonomy" id="10090"/>
    <lineage>
        <taxon>Eukaryota</taxon>
        <taxon>Metazoa</taxon>
        <taxon>Chordata</taxon>
        <taxon>Craniata</taxon>
        <taxon>Vertebrata</taxon>
        <taxon>Euteleostomi</taxon>
        <taxon>Mammalia</taxon>
        <taxon>Eutheria</taxon>
        <taxon>Euarchontoglires</taxon>
        <taxon>Glires</taxon>
        <taxon>Rodentia</taxon>
        <taxon>Myomorpha</taxon>
        <taxon>Muroidea</taxon>
        <taxon>Muridae</taxon>
        <taxon>Murinae</taxon>
        <taxon>Mus</taxon>
        <taxon>Mus</taxon>
    </lineage>
</organism>
<comment type="function">
    <text evidence="1 6 7">Acts as an epigenetic regulator of myogenesis in cooperation with DPF3a (isoform 2 of DPF3/BAF45C) (PubMed:32459350). Associates with the BAF complex via its interaction with DPF3a and HDGFL2-DPF3a activate myogenic genes by increasing chromatin accessibility through recruitment of SMARCA4/BRG1/BAF190A (ATPase subunit of the BAF complex) to myogenic gene promoters (PubMed:32459350). Promotes the repair of DNA double-strand breaks (DSBs) through the homologous recombination pathway by facilitating the recruitment of the DNA endonuclease RBBP8 to the DSBs (By similarity). Preferentially binds to chromatin regions marked by H3K9me3, H3K27me3 and H3K36me2 (By similarity). Involved in cellular growth control, through the regulation of cyclin D1 expression (By similarity). Associates with chromatin (PubMed:22212508).</text>
</comment>
<comment type="function">
    <molecule>Isoform 1</molecule>
    <text evidence="6">Binds to condensed chromatin in mitotic cells.</text>
</comment>
<comment type="function">
    <molecule>Isoform 3</molecule>
    <text evidence="6">Binds to condensed chromatin in mitotic cells.</text>
</comment>
<comment type="function">
    <molecule>Isoform 4</molecule>
    <text evidence="6">Binds to non-condensed chromatin in the presence of HDGF.</text>
</comment>
<comment type="subunit">
    <text evidence="1 7">Interacts with trimethylated 'Lys-36' of histone H3 (H3K36me3). Interacts with trimethylated 'Lys-79' of histone H3 (H3K79me3), but has higher affinity for H3K36me3 (By similarity). Interacts with IWS1 (By similarity). Interacts with H2AX, POGZ, RBBP8 and CBX1 (By similarity). Interacts with histones H3K9me3, H3K27me3 and H3K36me2 (By similarity). Interacts with DPF3a (isoform 2 of DPF3/BAF45C) (PubMed:32459350). Interacts with SMARCA4/BRG1/BAF190A, in a DPF3a-dependent manner (PubMed:32459350). Interacts with SMARCC1/BAF155 and SMARCD1/BAF60A in a DPF3a-dependent manner (By similarity).</text>
</comment>
<comment type="subunit">
    <molecule>Isoform 1</molecule>
    <text evidence="6">Interacts with HDGF.</text>
</comment>
<comment type="subunit">
    <molecule>Isoform 3</molecule>
    <text evidence="6">Interacts with HDGF.</text>
</comment>
<comment type="subunit">
    <molecule>Isoform 4</molecule>
    <text evidence="6">Selectively interacts with HDGF (N-terminally processed form).</text>
</comment>
<comment type="interaction">
    <interactant intactId="EBI-7627961">
        <id>Q3UMU9</id>
    </interactant>
    <interactant intactId="EBI-2943087">
        <id>P51859</id>
        <label>Hdgf</label>
    </interactant>
    <organismsDiffer>false</organismsDiffer>
    <experiments>4</experiments>
</comment>
<comment type="interaction">
    <interactant intactId="EBI-7627862">
        <id>Q3UMU9-1</id>
    </interactant>
    <interactant intactId="EBI-2943087">
        <id>P51859</id>
        <label>Hdgf</label>
    </interactant>
    <organismsDiffer>false</organismsDiffer>
    <experiments>4</experiments>
</comment>
<comment type="interaction">
    <interactant intactId="EBI-7627932">
        <id>Q3UMU9-3</id>
    </interactant>
    <interactant intactId="EBI-2943087">
        <id>P51859</id>
        <label>Hdgf</label>
    </interactant>
    <organismsDiffer>false</organismsDiffer>
    <experiments>4</experiments>
</comment>
<comment type="subcellular location">
    <subcellularLocation>
        <location evidence="2">Cytoplasm</location>
    </subcellularLocation>
</comment>
<comment type="subcellular location">
    <molecule>Isoform 1</molecule>
    <subcellularLocation>
        <location evidence="6">Nucleus</location>
    </subcellularLocation>
</comment>
<comment type="subcellular location">
    <molecule>Isoform 3</molecule>
    <subcellularLocation>
        <location evidence="6">Nucleus</location>
    </subcellularLocation>
</comment>
<comment type="subcellular location">
    <molecule>Isoform 4</molecule>
    <subcellularLocation>
        <location evidence="6">Nucleus</location>
    </subcellularLocation>
    <text evidence="6">Displays a punctate pattern and colocalizes with N-terminally processed HDFG.</text>
</comment>
<comment type="alternative products">
    <event type="alternative splicing"/>
    <isoform>
        <id>Q3UMU9-1</id>
        <name>1</name>
        <name>Isoform a</name>
        <sequence type="displayed"/>
    </isoform>
    <isoform>
        <id>Q3UMU9-2</id>
        <name>2</name>
        <sequence type="described" ref="VSP_031118 VSP_031119"/>
    </isoform>
    <isoform>
        <id>Q3UMU9-3</id>
        <name>3</name>
        <name>Isoform b</name>
        <sequence type="described" ref="VSP_031117"/>
    </isoform>
    <isoform>
        <id>Q3UMU9-4</id>
        <name>4</name>
        <name>Isoform c</name>
        <sequence type="described" ref="VSP_047648 VSP_031119"/>
    </isoform>
</comment>
<comment type="tissue specificity">
    <text evidence="6">Ubiquitously expressed.</text>
</comment>
<comment type="disruption phenotype">
    <text evidence="7">Mice show severely impaired post-injury muscle regeneration.</text>
</comment>
<comment type="similarity">
    <text evidence="11">Belongs to the HDGF family.</text>
</comment>
<keyword id="KW-0025">Alternative splicing</keyword>
<keyword id="KW-0175">Coiled coil</keyword>
<keyword id="KW-0963">Cytoplasm</keyword>
<keyword id="KW-0227">DNA damage</keyword>
<keyword id="KW-0233">DNA recombination</keyword>
<keyword id="KW-0234">DNA repair</keyword>
<keyword id="KW-1017">Isopeptide bond</keyword>
<keyword id="KW-0517">Myogenesis</keyword>
<keyword id="KW-0539">Nucleus</keyword>
<keyword id="KW-0597">Phosphoprotein</keyword>
<keyword id="KW-1185">Reference proteome</keyword>
<keyword id="KW-0832">Ubl conjugation</keyword>
<reference key="1">
    <citation type="journal article" date="1997" name="Biochem. Biophys. Res. Commun.">
        <title>Hepatoma-derived growth factor belongs to a gene family in mice showing significant homology in the amino terminus.</title>
        <authorList>
            <person name="Izumoto Y."/>
            <person name="Kuroda T."/>
            <person name="Harada H."/>
            <person name="Kishimoto T."/>
            <person name="Nakamura H."/>
        </authorList>
    </citation>
    <scope>NUCLEOTIDE SEQUENCE [MRNA] (ISOFORM 1)</scope>
    <source>
        <strain>BALB/cJ</strain>
        <tissue>Testis</tissue>
    </source>
</reference>
<reference key="2">
    <citation type="journal article" date="2012" name="FEBS J.">
        <title>Interaction of HRP-2 isoforms with HDGF: chromatin binding of a specific heteromer.</title>
        <authorList>
            <person name="Thakar K."/>
            <person name="Votteler I."/>
            <person name="Kelkar D."/>
            <person name="Shidore T."/>
            <person name="Gupta S."/>
            <person name="Kelm S."/>
            <person name="Dietz F."/>
        </authorList>
    </citation>
    <scope>NUCLEOTIDE SEQUENCE [MRNA] (ISOFORM 4)</scope>
    <scope>ALTERNATIVE SPLICING</scope>
    <scope>FUNCTION (ISOFORMS 1; 3 AND 4)</scope>
    <scope>INTERACTION WITH HDGF (ISOFORMS 1; 3 AND 4)</scope>
    <scope>SUBCELLULAR LOCATION (ISOFORMS 1; 3 AND 4)</scope>
    <scope>TISSUE SPECIFICITY (ISOFORM 4)</scope>
    <source>
        <strain>BALB/cJ</strain>
        <tissue>Brain</tissue>
    </source>
</reference>
<reference key="3">
    <citation type="journal article" date="2005" name="Science">
        <title>The transcriptional landscape of the mammalian genome.</title>
        <authorList>
            <person name="Carninci P."/>
            <person name="Kasukawa T."/>
            <person name="Katayama S."/>
            <person name="Gough J."/>
            <person name="Frith M.C."/>
            <person name="Maeda N."/>
            <person name="Oyama R."/>
            <person name="Ravasi T."/>
            <person name="Lenhard B."/>
            <person name="Wells C."/>
            <person name="Kodzius R."/>
            <person name="Shimokawa K."/>
            <person name="Bajic V.B."/>
            <person name="Brenner S.E."/>
            <person name="Batalov S."/>
            <person name="Forrest A.R."/>
            <person name="Zavolan M."/>
            <person name="Davis M.J."/>
            <person name="Wilming L.G."/>
            <person name="Aidinis V."/>
            <person name="Allen J.E."/>
            <person name="Ambesi-Impiombato A."/>
            <person name="Apweiler R."/>
            <person name="Aturaliya R.N."/>
            <person name="Bailey T.L."/>
            <person name="Bansal M."/>
            <person name="Baxter L."/>
            <person name="Beisel K.W."/>
            <person name="Bersano T."/>
            <person name="Bono H."/>
            <person name="Chalk A.M."/>
            <person name="Chiu K.P."/>
            <person name="Choudhary V."/>
            <person name="Christoffels A."/>
            <person name="Clutterbuck D.R."/>
            <person name="Crowe M.L."/>
            <person name="Dalla E."/>
            <person name="Dalrymple B.P."/>
            <person name="de Bono B."/>
            <person name="Della Gatta G."/>
            <person name="di Bernardo D."/>
            <person name="Down T."/>
            <person name="Engstrom P."/>
            <person name="Fagiolini M."/>
            <person name="Faulkner G."/>
            <person name="Fletcher C.F."/>
            <person name="Fukushima T."/>
            <person name="Furuno M."/>
            <person name="Futaki S."/>
            <person name="Gariboldi M."/>
            <person name="Georgii-Hemming P."/>
            <person name="Gingeras T.R."/>
            <person name="Gojobori T."/>
            <person name="Green R.E."/>
            <person name="Gustincich S."/>
            <person name="Harbers M."/>
            <person name="Hayashi Y."/>
            <person name="Hensch T.K."/>
            <person name="Hirokawa N."/>
            <person name="Hill D."/>
            <person name="Huminiecki L."/>
            <person name="Iacono M."/>
            <person name="Ikeo K."/>
            <person name="Iwama A."/>
            <person name="Ishikawa T."/>
            <person name="Jakt M."/>
            <person name="Kanapin A."/>
            <person name="Katoh M."/>
            <person name="Kawasawa Y."/>
            <person name="Kelso J."/>
            <person name="Kitamura H."/>
            <person name="Kitano H."/>
            <person name="Kollias G."/>
            <person name="Krishnan S.P."/>
            <person name="Kruger A."/>
            <person name="Kummerfeld S.K."/>
            <person name="Kurochkin I.V."/>
            <person name="Lareau L.F."/>
            <person name="Lazarevic D."/>
            <person name="Lipovich L."/>
            <person name="Liu J."/>
            <person name="Liuni S."/>
            <person name="McWilliam S."/>
            <person name="Madan Babu M."/>
            <person name="Madera M."/>
            <person name="Marchionni L."/>
            <person name="Matsuda H."/>
            <person name="Matsuzawa S."/>
            <person name="Miki H."/>
            <person name="Mignone F."/>
            <person name="Miyake S."/>
            <person name="Morris K."/>
            <person name="Mottagui-Tabar S."/>
            <person name="Mulder N."/>
            <person name="Nakano N."/>
            <person name="Nakauchi H."/>
            <person name="Ng P."/>
            <person name="Nilsson R."/>
            <person name="Nishiguchi S."/>
            <person name="Nishikawa S."/>
            <person name="Nori F."/>
            <person name="Ohara O."/>
            <person name="Okazaki Y."/>
            <person name="Orlando V."/>
            <person name="Pang K.C."/>
            <person name="Pavan W.J."/>
            <person name="Pavesi G."/>
            <person name="Pesole G."/>
            <person name="Petrovsky N."/>
            <person name="Piazza S."/>
            <person name="Reed J."/>
            <person name="Reid J.F."/>
            <person name="Ring B.Z."/>
            <person name="Ringwald M."/>
            <person name="Rost B."/>
            <person name="Ruan Y."/>
            <person name="Salzberg S.L."/>
            <person name="Sandelin A."/>
            <person name="Schneider C."/>
            <person name="Schoenbach C."/>
            <person name="Sekiguchi K."/>
            <person name="Semple C.A."/>
            <person name="Seno S."/>
            <person name="Sessa L."/>
            <person name="Sheng Y."/>
            <person name="Shibata Y."/>
            <person name="Shimada H."/>
            <person name="Shimada K."/>
            <person name="Silva D."/>
            <person name="Sinclair B."/>
            <person name="Sperling S."/>
            <person name="Stupka E."/>
            <person name="Sugiura K."/>
            <person name="Sultana R."/>
            <person name="Takenaka Y."/>
            <person name="Taki K."/>
            <person name="Tammoja K."/>
            <person name="Tan S.L."/>
            <person name="Tang S."/>
            <person name="Taylor M.S."/>
            <person name="Tegner J."/>
            <person name="Teichmann S.A."/>
            <person name="Ueda H.R."/>
            <person name="van Nimwegen E."/>
            <person name="Verardo R."/>
            <person name="Wei C.L."/>
            <person name="Yagi K."/>
            <person name="Yamanishi H."/>
            <person name="Zabarovsky E."/>
            <person name="Zhu S."/>
            <person name="Zimmer A."/>
            <person name="Hide W."/>
            <person name="Bult C."/>
            <person name="Grimmond S.M."/>
            <person name="Teasdale R.D."/>
            <person name="Liu E.T."/>
            <person name="Brusic V."/>
            <person name="Quackenbush J."/>
            <person name="Wahlestedt C."/>
            <person name="Mattick J.S."/>
            <person name="Hume D.A."/>
            <person name="Kai C."/>
            <person name="Sasaki D."/>
            <person name="Tomaru Y."/>
            <person name="Fukuda S."/>
            <person name="Kanamori-Katayama M."/>
            <person name="Suzuki M."/>
            <person name="Aoki J."/>
            <person name="Arakawa T."/>
            <person name="Iida J."/>
            <person name="Imamura K."/>
            <person name="Itoh M."/>
            <person name="Kato T."/>
            <person name="Kawaji H."/>
            <person name="Kawagashira N."/>
            <person name="Kawashima T."/>
            <person name="Kojima M."/>
            <person name="Kondo S."/>
            <person name="Konno H."/>
            <person name="Nakano K."/>
            <person name="Ninomiya N."/>
            <person name="Nishio T."/>
            <person name="Okada M."/>
            <person name="Plessy C."/>
            <person name="Shibata K."/>
            <person name="Shiraki T."/>
            <person name="Suzuki S."/>
            <person name="Tagami M."/>
            <person name="Waki K."/>
            <person name="Watahiki A."/>
            <person name="Okamura-Oho Y."/>
            <person name="Suzuki H."/>
            <person name="Kawai J."/>
            <person name="Hayashizaki Y."/>
        </authorList>
    </citation>
    <scope>NUCLEOTIDE SEQUENCE [LARGE SCALE MRNA] (ISOFORMS 1; 2 AND 3)</scope>
    <source>
        <strain>C57BL/6J</strain>
        <tissue>Heart</tissue>
        <tissue>Lung</tissue>
        <tissue>Spleen</tissue>
    </source>
</reference>
<reference key="4">
    <citation type="journal article" date="2004" name="Genome Res.">
        <title>The status, quality, and expansion of the NIH full-length cDNA project: the Mammalian Gene Collection (MGC).</title>
        <authorList>
            <consortium name="The MGC Project Team"/>
        </authorList>
    </citation>
    <scope>NUCLEOTIDE SEQUENCE [LARGE SCALE MRNA] (ISOFORM 3)</scope>
    <source>
        <strain>FVB/N</strain>
        <tissue>Mammary tumor</tissue>
    </source>
</reference>
<reference key="5">
    <citation type="journal article" date="2004" name="Mol. Cell. Proteomics">
        <title>Phosphoproteomic analysis of the developing mouse brain.</title>
        <authorList>
            <person name="Ballif B.A."/>
            <person name="Villen J."/>
            <person name="Beausoleil S.A."/>
            <person name="Schwartz D."/>
            <person name="Gygi S.P."/>
        </authorList>
    </citation>
    <scope>PHOSPHORYLATION [LARGE SCALE ANALYSIS] AT SER-366 AND SER-367</scope>
    <scope>IDENTIFICATION BY MASS SPECTROMETRY [LARGE SCALE ANALYSIS]</scope>
    <source>
        <tissue>Embryonic brain</tissue>
    </source>
</reference>
<reference key="6">
    <citation type="journal article" date="2007" name="J. Proteome Res.">
        <title>A differential phosphoproteomic analysis of retinoic acid-treated P19 cells.</title>
        <authorList>
            <person name="Smith J.C."/>
            <person name="Duchesne M.A."/>
            <person name="Tozzi P."/>
            <person name="Ethier M."/>
            <person name="Figeys D."/>
        </authorList>
    </citation>
    <scope>PHOSPHORYLATION [LARGE SCALE ANALYSIS] AT SER-366 AND SER-367</scope>
    <scope>IDENTIFICATION BY MASS SPECTROMETRY [LARGE SCALE ANALYSIS]</scope>
    <source>
        <tissue>Teratocarcinoma</tissue>
    </source>
</reference>
<reference key="7">
    <citation type="journal article" date="2007" name="Proc. Natl. Acad. Sci. U.S.A.">
        <title>Large-scale phosphorylation analysis of mouse liver.</title>
        <authorList>
            <person name="Villen J."/>
            <person name="Beausoleil S.A."/>
            <person name="Gerber S.A."/>
            <person name="Gygi S.P."/>
        </authorList>
    </citation>
    <scope>PHOSPHORYLATION [LARGE SCALE ANALYSIS] AT SER-366; SER-450 AND SER-635</scope>
    <scope>IDENTIFICATION BY MASS SPECTROMETRY [LARGE SCALE ANALYSIS]</scope>
    <source>
        <tissue>Liver</tissue>
    </source>
</reference>
<reference key="8">
    <citation type="journal article" date="2009" name="Immunity">
        <title>The phagosomal proteome in interferon-gamma-activated macrophages.</title>
        <authorList>
            <person name="Trost M."/>
            <person name="English L."/>
            <person name="Lemieux S."/>
            <person name="Courcelles M."/>
            <person name="Desjardins M."/>
            <person name="Thibault P."/>
        </authorList>
    </citation>
    <scope>PHOSPHORYLATION [LARGE SCALE ANALYSIS] AT SER-366 AND SER-367</scope>
    <scope>IDENTIFICATION BY MASS SPECTROMETRY [LARGE SCALE ANALYSIS]</scope>
</reference>
<reference key="9">
    <citation type="journal article" date="2009" name="Mol. Cell. Proteomics">
        <title>Large scale localization of protein phosphorylation by use of electron capture dissociation mass spectrometry.</title>
        <authorList>
            <person name="Sweet S.M."/>
            <person name="Bailey C.M."/>
            <person name="Cunningham D.L."/>
            <person name="Heath J.K."/>
            <person name="Cooper H.J."/>
        </authorList>
    </citation>
    <scope>PHOSPHORYLATION [LARGE SCALE ANALYSIS] AT SER-366 AND SER-367</scope>
    <scope>IDENTIFICATION BY MASS SPECTROMETRY [LARGE SCALE ANALYSIS]</scope>
    <source>
        <tissue>Embryonic fibroblast</tissue>
    </source>
</reference>
<reference key="10">
    <citation type="journal article" date="2010" name="Cell">
        <title>A tissue-specific atlas of mouse protein phosphorylation and expression.</title>
        <authorList>
            <person name="Huttlin E.L."/>
            <person name="Jedrychowski M.P."/>
            <person name="Elias J.E."/>
            <person name="Goswami T."/>
            <person name="Rad R."/>
            <person name="Beausoleil S.A."/>
            <person name="Villen J."/>
            <person name="Haas W."/>
            <person name="Sowa M.E."/>
            <person name="Gygi S.P."/>
        </authorList>
    </citation>
    <scope>PHOSPHORYLATION [LARGE SCALE ANALYSIS] AT SER-366; SER-450; SER-620; SER-628; SER-629; SER-635; SER-640; SER-659; SER-661 AND SER-669</scope>
    <scope>PHOSPHORYLATION [LARGE SCALE ANALYSIS] AT SER-619 (ISOFORM 2)</scope>
    <scope>PHOSPHORYLATION [LARGE SCALE ANALYSIS] AT SER-567 (ISOFORM 4)</scope>
    <scope>IDENTIFICATION BY MASS SPECTROMETRY [LARGE SCALE ANALYSIS]</scope>
    <source>
        <tissue>Brain</tissue>
        <tissue>Brown adipose tissue</tissue>
        <tissue>Heart</tissue>
        <tissue>Kidney</tissue>
        <tissue>Liver</tissue>
        <tissue>Lung</tissue>
        <tissue>Pancreas</tissue>
        <tissue>Spleen</tissue>
        <tissue>Testis</tissue>
    </source>
</reference>
<reference key="11">
    <citation type="journal article" date="2020" name="Nucleic Acids Res.">
        <title>HRP2-DPF3a-BAF complex coordinates histone modification and chromatin remodeling to regulate myogenic gene transcription.</title>
        <authorList>
            <person name="Zhu X."/>
            <person name="Lan B."/>
            <person name="Yi X."/>
            <person name="He C."/>
            <person name="Dang L."/>
            <person name="Zhou X."/>
            <person name="Lu Y."/>
            <person name="Sun Y."/>
            <person name="Liu Z."/>
            <person name="Bai X."/>
            <person name="Zhang K."/>
            <person name="Li B."/>
            <person name="Li M.J."/>
            <person name="Chen Y."/>
            <person name="Zhang L."/>
        </authorList>
    </citation>
    <scope>FUNCTION</scope>
    <scope>DISRUPTION PHENOTYPE</scope>
    <scope>INTERACTION WITH DPF3 AND SMARCA4</scope>
    <scope>MUTAGENESIS OF 523-ARG--ARG-524</scope>
</reference>
<proteinExistence type="evidence at protein level"/>
<protein>
    <recommendedName>
        <fullName>Hepatoma-derived growth factor-related protein 2</fullName>
        <shortName>HRP-2</shortName>
    </recommendedName>
</protein>
<evidence type="ECO:0000250" key="1">
    <source>
        <dbReference type="UniProtKB" id="Q7Z4V5"/>
    </source>
</evidence>
<evidence type="ECO:0000250" key="2">
    <source>
        <dbReference type="UniProtKB" id="Q925G1"/>
    </source>
</evidence>
<evidence type="ECO:0000255" key="3"/>
<evidence type="ECO:0000255" key="4">
    <source>
        <dbReference type="PROSITE-ProRule" id="PRU00162"/>
    </source>
</evidence>
<evidence type="ECO:0000256" key="5">
    <source>
        <dbReference type="SAM" id="MobiDB-lite"/>
    </source>
</evidence>
<evidence type="ECO:0000269" key="6">
    <source>
    </source>
</evidence>
<evidence type="ECO:0000269" key="7">
    <source>
    </source>
</evidence>
<evidence type="ECO:0000303" key="8">
    <source>
    </source>
</evidence>
<evidence type="ECO:0000303" key="9">
    <source>
    </source>
</evidence>
<evidence type="ECO:0000303" key="10">
    <source>
    </source>
</evidence>
<evidence type="ECO:0000305" key="11"/>
<evidence type="ECO:0007744" key="12">
    <source>
    </source>
</evidence>
<evidence type="ECO:0007744" key="13">
    <source>
    </source>
</evidence>
<evidence type="ECO:0007744" key="14">
    <source>
    </source>
</evidence>
<evidence type="ECO:0007744" key="15">
    <source>
    </source>
</evidence>
<evidence type="ECO:0007744" key="16">
    <source>
    </source>
</evidence>
<evidence type="ECO:0007744" key="17">
    <source>
    </source>
</evidence>
<accession>Q3UMU9</accession>
<accession>D6CHX5</accession>
<accession>O35540</accession>
<accession>Q3UIH6</accession>
<accession>Q99L92</accession>
<sequence>MPHAFKPGDLVFAKMKGYPHWPARIDDIADGAVKPPPNKYPIFFFGTHETAFLGPKDLFPYDKCKDKYGKPNKRKGFNEGLWEIQNNPHASYSAPPPVSSSDSEAPEADLGCGSDVDKDKESRRVMTVTAVTTTATSDRMESDSDSDKSSDHSGLKRKTPVLKVSVSKRARRASSDLDQASVSPSEEDSESPSESEKTSDQDFTPEKKTAARPPRRGPLGGRKKKKVPSASDSDSKADSDGAKEEPVVTAQPSPSSSSSSSSSSSSDSDVSVKKPPRGRKPAEKPPPKPRGRRPKPERPPSTSSSDSDSDSGEVDRISEWKRRDEERRRELEARRRREQEEELRRLREQEREEKERRKERAERGGSSGEELEDEEPVKKRSRKARGRGTPSSSDSEPEGELGKEGKKLAKKSQLPGSESARKPGQKEKRGRPDEKPRARPVKVERTRKRSEGLSLERKGEKKKEPSVEERLQKLHSEIKFALKVDNPDVRKCLSALEELGTLQVTSQILQKNTDVVATLKKIRRYKANKDVMAKAAEVYTRLKSRVLGPKVEALQKVNKAGAEKERADNEKLEEQPGEQAPRELAEDEPSTDRSAPVNGEATSQKGENMEDRAQEDGQDSEDGPRGGSSEELHDSPRDNSDPAKPGNERQDHERTRLASESANDDNEDS</sequence>